<reference key="1">
    <citation type="journal article" date="2008" name="Genome Biol.">
        <title>The complete genome, comparative and functional analysis of Stenotrophomonas maltophilia reveals an organism heavily shielded by drug resistance determinants.</title>
        <authorList>
            <person name="Crossman L.C."/>
            <person name="Gould V.C."/>
            <person name="Dow J.M."/>
            <person name="Vernikos G.S."/>
            <person name="Okazaki A."/>
            <person name="Sebaihia M."/>
            <person name="Saunders D."/>
            <person name="Arrowsmith C."/>
            <person name="Carver T."/>
            <person name="Peters N."/>
            <person name="Adlem E."/>
            <person name="Kerhornou A."/>
            <person name="Lord A."/>
            <person name="Murphy L."/>
            <person name="Seeger K."/>
            <person name="Squares R."/>
            <person name="Rutter S."/>
            <person name="Quail M.A."/>
            <person name="Rajandream M.A."/>
            <person name="Harris D."/>
            <person name="Churcher C."/>
            <person name="Bentley S.D."/>
            <person name="Parkhill J."/>
            <person name="Thomson N.R."/>
            <person name="Avison M.B."/>
        </authorList>
    </citation>
    <scope>NUCLEOTIDE SEQUENCE [LARGE SCALE GENOMIC DNA]</scope>
    <source>
        <strain>K279a</strain>
    </source>
</reference>
<sequence>MYSLARPFLFSLDAERAHGLGLSALDLAYRTGTTPLLAARIAPMPSTVFGLTFPNPVGLAAGLDKNGEHIDALFALGFGFVEIGTITPRPQAGNPQPRLFRLPEHNAIINRMGFNNAGVDALVRNVERARNRRGLLGINIGKNKDTPNEQAVDDYIACLDKVYPLADYITVNISSPNTAGLRELQEETALRQLVSQLRDRQEDLAARHGRRVPMLVKVAPDLSDRDIDAAARVLGELQVDGVIATNTTIDHSKVAGDPLANEAGGLSGAPVLEQSTLVLRRLRSRLPESVPLVGVGGILSGADAVAKMAAGAALVQCYSGLIFRGPALVSECVEAIRRRREAPSRGAVAPL</sequence>
<feature type="chain" id="PRO_1000100293" description="Dihydroorotate dehydrogenase (quinone)">
    <location>
        <begin position="1"/>
        <end position="351"/>
    </location>
</feature>
<feature type="active site" description="Nucleophile" evidence="1">
    <location>
        <position position="175"/>
    </location>
</feature>
<feature type="binding site" evidence="1">
    <location>
        <begin position="61"/>
        <end position="65"/>
    </location>
    <ligand>
        <name>FMN</name>
        <dbReference type="ChEBI" id="CHEBI:58210"/>
    </ligand>
</feature>
<feature type="binding site" evidence="1">
    <location>
        <position position="65"/>
    </location>
    <ligand>
        <name>substrate</name>
    </ligand>
</feature>
<feature type="binding site" evidence="1">
    <location>
        <position position="85"/>
    </location>
    <ligand>
        <name>FMN</name>
        <dbReference type="ChEBI" id="CHEBI:58210"/>
    </ligand>
</feature>
<feature type="binding site" evidence="1">
    <location>
        <begin position="110"/>
        <end position="114"/>
    </location>
    <ligand>
        <name>substrate</name>
    </ligand>
</feature>
<feature type="binding site" evidence="1">
    <location>
        <position position="139"/>
    </location>
    <ligand>
        <name>FMN</name>
        <dbReference type="ChEBI" id="CHEBI:58210"/>
    </ligand>
</feature>
<feature type="binding site" evidence="1">
    <location>
        <position position="172"/>
    </location>
    <ligand>
        <name>FMN</name>
        <dbReference type="ChEBI" id="CHEBI:58210"/>
    </ligand>
</feature>
<feature type="binding site" evidence="1">
    <location>
        <position position="172"/>
    </location>
    <ligand>
        <name>substrate</name>
    </ligand>
</feature>
<feature type="binding site" evidence="1">
    <location>
        <position position="177"/>
    </location>
    <ligand>
        <name>substrate</name>
    </ligand>
</feature>
<feature type="binding site" evidence="1">
    <location>
        <position position="217"/>
    </location>
    <ligand>
        <name>FMN</name>
        <dbReference type="ChEBI" id="CHEBI:58210"/>
    </ligand>
</feature>
<feature type="binding site" evidence="1">
    <location>
        <position position="245"/>
    </location>
    <ligand>
        <name>FMN</name>
        <dbReference type="ChEBI" id="CHEBI:58210"/>
    </ligand>
</feature>
<feature type="binding site" evidence="1">
    <location>
        <begin position="246"/>
        <end position="247"/>
    </location>
    <ligand>
        <name>substrate</name>
    </ligand>
</feature>
<feature type="binding site" evidence="1">
    <location>
        <position position="268"/>
    </location>
    <ligand>
        <name>FMN</name>
        <dbReference type="ChEBI" id="CHEBI:58210"/>
    </ligand>
</feature>
<feature type="binding site" evidence="1">
    <location>
        <position position="297"/>
    </location>
    <ligand>
        <name>FMN</name>
        <dbReference type="ChEBI" id="CHEBI:58210"/>
    </ligand>
</feature>
<feature type="binding site" evidence="1">
    <location>
        <begin position="318"/>
        <end position="319"/>
    </location>
    <ligand>
        <name>FMN</name>
        <dbReference type="ChEBI" id="CHEBI:58210"/>
    </ligand>
</feature>
<protein>
    <recommendedName>
        <fullName evidence="1">Dihydroorotate dehydrogenase (quinone)</fullName>
        <ecNumber evidence="1">1.3.5.2</ecNumber>
    </recommendedName>
    <alternativeName>
        <fullName evidence="1">DHOdehase</fullName>
        <shortName evidence="1">DHOD</shortName>
        <shortName evidence="1">DHODase</shortName>
    </alternativeName>
    <alternativeName>
        <fullName evidence="1">Dihydroorotate oxidase</fullName>
    </alternativeName>
</protein>
<comment type="function">
    <text evidence="1">Catalyzes the conversion of dihydroorotate to orotate with quinone as electron acceptor.</text>
</comment>
<comment type="catalytic activity">
    <reaction evidence="1">
        <text>(S)-dihydroorotate + a quinone = orotate + a quinol</text>
        <dbReference type="Rhea" id="RHEA:30187"/>
        <dbReference type="ChEBI" id="CHEBI:24646"/>
        <dbReference type="ChEBI" id="CHEBI:30839"/>
        <dbReference type="ChEBI" id="CHEBI:30864"/>
        <dbReference type="ChEBI" id="CHEBI:132124"/>
        <dbReference type="EC" id="1.3.5.2"/>
    </reaction>
</comment>
<comment type="cofactor">
    <cofactor evidence="1">
        <name>FMN</name>
        <dbReference type="ChEBI" id="CHEBI:58210"/>
    </cofactor>
    <text evidence="1">Binds 1 FMN per subunit.</text>
</comment>
<comment type="pathway">
    <text evidence="1">Pyrimidine metabolism; UMP biosynthesis via de novo pathway; orotate from (S)-dihydroorotate (quinone route): step 1/1.</text>
</comment>
<comment type="subunit">
    <text evidence="1">Monomer.</text>
</comment>
<comment type="subcellular location">
    <subcellularLocation>
        <location evidence="1">Cell membrane</location>
        <topology evidence="1">Peripheral membrane protein</topology>
    </subcellularLocation>
</comment>
<comment type="similarity">
    <text evidence="1">Belongs to the dihydroorotate dehydrogenase family. Type 2 subfamily.</text>
</comment>
<gene>
    <name evidence="1" type="primary">pyrD</name>
    <name type="ordered locus">Smlt2128</name>
</gene>
<proteinExistence type="inferred from homology"/>
<organism>
    <name type="scientific">Stenotrophomonas maltophilia (strain K279a)</name>
    <dbReference type="NCBI Taxonomy" id="522373"/>
    <lineage>
        <taxon>Bacteria</taxon>
        <taxon>Pseudomonadati</taxon>
        <taxon>Pseudomonadota</taxon>
        <taxon>Gammaproteobacteria</taxon>
        <taxon>Lysobacterales</taxon>
        <taxon>Lysobacteraceae</taxon>
        <taxon>Stenotrophomonas</taxon>
        <taxon>Stenotrophomonas maltophilia group</taxon>
    </lineage>
</organism>
<evidence type="ECO:0000255" key="1">
    <source>
        <dbReference type="HAMAP-Rule" id="MF_00225"/>
    </source>
</evidence>
<dbReference type="EC" id="1.3.5.2" evidence="1"/>
<dbReference type="EMBL" id="AM743169">
    <property type="protein sequence ID" value="CAQ45630.1"/>
    <property type="molecule type" value="Genomic_DNA"/>
</dbReference>
<dbReference type="RefSeq" id="WP_005409365.1">
    <property type="nucleotide sequence ID" value="NC_010943.1"/>
</dbReference>
<dbReference type="SMR" id="B2FPI7"/>
<dbReference type="EnsemblBacteria" id="CAQ45630">
    <property type="protein sequence ID" value="CAQ45630"/>
    <property type="gene ID" value="Smlt2128"/>
</dbReference>
<dbReference type="KEGG" id="sml:Smlt2128"/>
<dbReference type="eggNOG" id="COG0167">
    <property type="taxonomic scope" value="Bacteria"/>
</dbReference>
<dbReference type="HOGENOM" id="CLU_013640_2_0_6"/>
<dbReference type="UniPathway" id="UPA00070">
    <property type="reaction ID" value="UER00946"/>
</dbReference>
<dbReference type="Proteomes" id="UP000008840">
    <property type="component" value="Chromosome"/>
</dbReference>
<dbReference type="GO" id="GO:0005737">
    <property type="term" value="C:cytoplasm"/>
    <property type="evidence" value="ECO:0007669"/>
    <property type="project" value="InterPro"/>
</dbReference>
<dbReference type="GO" id="GO:0005886">
    <property type="term" value="C:plasma membrane"/>
    <property type="evidence" value="ECO:0007669"/>
    <property type="project" value="UniProtKB-SubCell"/>
</dbReference>
<dbReference type="GO" id="GO:0106430">
    <property type="term" value="F:dihydroorotate dehydrogenase (quinone) activity"/>
    <property type="evidence" value="ECO:0007669"/>
    <property type="project" value="UniProtKB-EC"/>
</dbReference>
<dbReference type="GO" id="GO:0006207">
    <property type="term" value="P:'de novo' pyrimidine nucleobase biosynthetic process"/>
    <property type="evidence" value="ECO:0007669"/>
    <property type="project" value="InterPro"/>
</dbReference>
<dbReference type="GO" id="GO:0044205">
    <property type="term" value="P:'de novo' UMP biosynthetic process"/>
    <property type="evidence" value="ECO:0007669"/>
    <property type="project" value="UniProtKB-UniRule"/>
</dbReference>
<dbReference type="CDD" id="cd04738">
    <property type="entry name" value="DHOD_2_like"/>
    <property type="match status" value="1"/>
</dbReference>
<dbReference type="FunFam" id="3.20.20.70:FF:000028">
    <property type="entry name" value="Dihydroorotate dehydrogenase (quinone)"/>
    <property type="match status" value="1"/>
</dbReference>
<dbReference type="Gene3D" id="3.20.20.70">
    <property type="entry name" value="Aldolase class I"/>
    <property type="match status" value="1"/>
</dbReference>
<dbReference type="HAMAP" id="MF_00225">
    <property type="entry name" value="DHO_dh_type2"/>
    <property type="match status" value="1"/>
</dbReference>
<dbReference type="InterPro" id="IPR013785">
    <property type="entry name" value="Aldolase_TIM"/>
</dbReference>
<dbReference type="InterPro" id="IPR050074">
    <property type="entry name" value="DHO_dehydrogenase"/>
</dbReference>
<dbReference type="InterPro" id="IPR012135">
    <property type="entry name" value="Dihydroorotate_DH_1_2"/>
</dbReference>
<dbReference type="InterPro" id="IPR005719">
    <property type="entry name" value="Dihydroorotate_DH_2"/>
</dbReference>
<dbReference type="InterPro" id="IPR005720">
    <property type="entry name" value="Dihydroorotate_DH_cat"/>
</dbReference>
<dbReference type="InterPro" id="IPR001295">
    <property type="entry name" value="Dihydroorotate_DH_CS"/>
</dbReference>
<dbReference type="NCBIfam" id="NF003644">
    <property type="entry name" value="PRK05286.1-1"/>
    <property type="match status" value="1"/>
</dbReference>
<dbReference type="NCBIfam" id="NF003645">
    <property type="entry name" value="PRK05286.1-2"/>
    <property type="match status" value="1"/>
</dbReference>
<dbReference type="NCBIfam" id="NF003646">
    <property type="entry name" value="PRK05286.1-4"/>
    <property type="match status" value="1"/>
</dbReference>
<dbReference type="NCBIfam" id="NF003652">
    <property type="entry name" value="PRK05286.2-5"/>
    <property type="match status" value="1"/>
</dbReference>
<dbReference type="NCBIfam" id="TIGR01036">
    <property type="entry name" value="pyrD_sub2"/>
    <property type="match status" value="1"/>
</dbReference>
<dbReference type="PANTHER" id="PTHR48109:SF4">
    <property type="entry name" value="DIHYDROOROTATE DEHYDROGENASE (QUINONE), MITOCHONDRIAL"/>
    <property type="match status" value="1"/>
</dbReference>
<dbReference type="PANTHER" id="PTHR48109">
    <property type="entry name" value="DIHYDROOROTATE DEHYDROGENASE (QUINONE), MITOCHONDRIAL-RELATED"/>
    <property type="match status" value="1"/>
</dbReference>
<dbReference type="Pfam" id="PF01180">
    <property type="entry name" value="DHO_dh"/>
    <property type="match status" value="1"/>
</dbReference>
<dbReference type="PIRSF" id="PIRSF000164">
    <property type="entry name" value="DHO_oxidase"/>
    <property type="match status" value="1"/>
</dbReference>
<dbReference type="SUPFAM" id="SSF51395">
    <property type="entry name" value="FMN-linked oxidoreductases"/>
    <property type="match status" value="1"/>
</dbReference>
<dbReference type="PROSITE" id="PS00911">
    <property type="entry name" value="DHODEHASE_1"/>
    <property type="match status" value="1"/>
</dbReference>
<dbReference type="PROSITE" id="PS00912">
    <property type="entry name" value="DHODEHASE_2"/>
    <property type="match status" value="1"/>
</dbReference>
<name>PYRD_STRMK</name>
<keyword id="KW-1003">Cell membrane</keyword>
<keyword id="KW-0285">Flavoprotein</keyword>
<keyword id="KW-0288">FMN</keyword>
<keyword id="KW-0472">Membrane</keyword>
<keyword id="KW-0560">Oxidoreductase</keyword>
<keyword id="KW-0665">Pyrimidine biosynthesis</keyword>
<keyword id="KW-1185">Reference proteome</keyword>
<accession>B2FPI7</accession>